<accession>B3R0G5</accession>
<proteinExistence type="inferred from homology"/>
<organism>
    <name type="scientific">Phytoplasma mali (strain AT)</name>
    <dbReference type="NCBI Taxonomy" id="482235"/>
    <lineage>
        <taxon>Bacteria</taxon>
        <taxon>Bacillati</taxon>
        <taxon>Mycoplasmatota</taxon>
        <taxon>Mollicutes</taxon>
        <taxon>Acholeplasmatales</taxon>
        <taxon>Acholeplasmataceae</taxon>
        <taxon>Candidatus Phytoplasma</taxon>
        <taxon>16SrX (Apple proliferation group)</taxon>
    </lineage>
</organism>
<sequence>MNQEINNFYIKDQEIFDQIKLEEKRQKESINLIASENFVSQDVLKVQGTILTNKYAEGYPEKRFYNGCQYIDEIEKIAIERATELFKAKYANVQPHSGSQANMAVFQALLNPNDRILGLSLSDGGHLTHGSKMNFSGKYYESYFYGLNSKTETIDYAEVEKIAFAIRPKLIITGYSSYSKIIDFKSFRKIANKVNAYLMADIAHISGLVASGLHPCPLEAQADVVTSTTHKTLRGPRGGLILTNNKEIINKINKAVFPGGQGGPLMHIIAAKAVAFKEALHSDFIKYQKQILKNACFFAENLQKKGYRIISKSTENHLFLVDVKSKNPNFTGKKISDILNKVNIVVNKNVIPFDKETPLITSGIRLGTPAMTTRGFKENEFAKVSDFIDEAITNHNDLNYLNNLKQKVITLSKNFPLKI</sequence>
<dbReference type="EC" id="2.1.2.1" evidence="1"/>
<dbReference type="EMBL" id="CU469464">
    <property type="protein sequence ID" value="CAP18329.1"/>
    <property type="molecule type" value="Genomic_DNA"/>
</dbReference>
<dbReference type="SMR" id="B3R0G5"/>
<dbReference type="STRING" id="37692.ATP_00142"/>
<dbReference type="KEGG" id="pml:ATP_00142"/>
<dbReference type="eggNOG" id="COG0112">
    <property type="taxonomic scope" value="Bacteria"/>
</dbReference>
<dbReference type="HOGENOM" id="CLU_022477_2_1_14"/>
<dbReference type="UniPathway" id="UPA00193"/>
<dbReference type="UniPathway" id="UPA00288">
    <property type="reaction ID" value="UER01023"/>
</dbReference>
<dbReference type="Proteomes" id="UP000002020">
    <property type="component" value="Chromosome"/>
</dbReference>
<dbReference type="GO" id="GO:0005829">
    <property type="term" value="C:cytosol"/>
    <property type="evidence" value="ECO:0007669"/>
    <property type="project" value="TreeGrafter"/>
</dbReference>
<dbReference type="GO" id="GO:0004372">
    <property type="term" value="F:glycine hydroxymethyltransferase activity"/>
    <property type="evidence" value="ECO:0007669"/>
    <property type="project" value="UniProtKB-UniRule"/>
</dbReference>
<dbReference type="GO" id="GO:0030170">
    <property type="term" value="F:pyridoxal phosphate binding"/>
    <property type="evidence" value="ECO:0007669"/>
    <property type="project" value="UniProtKB-UniRule"/>
</dbReference>
<dbReference type="GO" id="GO:0019264">
    <property type="term" value="P:glycine biosynthetic process from serine"/>
    <property type="evidence" value="ECO:0007669"/>
    <property type="project" value="UniProtKB-UniRule"/>
</dbReference>
<dbReference type="GO" id="GO:0035999">
    <property type="term" value="P:tetrahydrofolate interconversion"/>
    <property type="evidence" value="ECO:0007669"/>
    <property type="project" value="UniProtKB-UniRule"/>
</dbReference>
<dbReference type="CDD" id="cd00378">
    <property type="entry name" value="SHMT"/>
    <property type="match status" value="1"/>
</dbReference>
<dbReference type="FunFam" id="3.40.640.10:FF:000001">
    <property type="entry name" value="Serine hydroxymethyltransferase"/>
    <property type="match status" value="1"/>
</dbReference>
<dbReference type="Gene3D" id="3.90.1150.10">
    <property type="entry name" value="Aspartate Aminotransferase, domain 1"/>
    <property type="match status" value="1"/>
</dbReference>
<dbReference type="Gene3D" id="3.40.640.10">
    <property type="entry name" value="Type I PLP-dependent aspartate aminotransferase-like (Major domain)"/>
    <property type="match status" value="1"/>
</dbReference>
<dbReference type="HAMAP" id="MF_00051">
    <property type="entry name" value="SHMT"/>
    <property type="match status" value="1"/>
</dbReference>
<dbReference type="InterPro" id="IPR015424">
    <property type="entry name" value="PyrdxlP-dep_Trfase"/>
</dbReference>
<dbReference type="InterPro" id="IPR015421">
    <property type="entry name" value="PyrdxlP-dep_Trfase_major"/>
</dbReference>
<dbReference type="InterPro" id="IPR015422">
    <property type="entry name" value="PyrdxlP-dep_Trfase_small"/>
</dbReference>
<dbReference type="InterPro" id="IPR001085">
    <property type="entry name" value="Ser_HO-MeTrfase"/>
</dbReference>
<dbReference type="InterPro" id="IPR049943">
    <property type="entry name" value="Ser_HO-MeTrfase-like"/>
</dbReference>
<dbReference type="InterPro" id="IPR019798">
    <property type="entry name" value="Ser_HO-MeTrfase_PLP_BS"/>
</dbReference>
<dbReference type="InterPro" id="IPR039429">
    <property type="entry name" value="SHMT-like_dom"/>
</dbReference>
<dbReference type="NCBIfam" id="NF000586">
    <property type="entry name" value="PRK00011.1"/>
    <property type="match status" value="1"/>
</dbReference>
<dbReference type="PANTHER" id="PTHR11680">
    <property type="entry name" value="SERINE HYDROXYMETHYLTRANSFERASE"/>
    <property type="match status" value="1"/>
</dbReference>
<dbReference type="PANTHER" id="PTHR11680:SF35">
    <property type="entry name" value="SERINE HYDROXYMETHYLTRANSFERASE 1"/>
    <property type="match status" value="1"/>
</dbReference>
<dbReference type="Pfam" id="PF00464">
    <property type="entry name" value="SHMT"/>
    <property type="match status" value="1"/>
</dbReference>
<dbReference type="PIRSF" id="PIRSF000412">
    <property type="entry name" value="SHMT"/>
    <property type="match status" value="1"/>
</dbReference>
<dbReference type="SUPFAM" id="SSF53383">
    <property type="entry name" value="PLP-dependent transferases"/>
    <property type="match status" value="1"/>
</dbReference>
<dbReference type="PROSITE" id="PS00096">
    <property type="entry name" value="SHMT"/>
    <property type="match status" value="1"/>
</dbReference>
<reference key="1">
    <citation type="journal article" date="2008" name="BMC Genomics">
        <title>The linear chromosome of the plant-pathogenic mycoplasma 'Candidatus Phytoplasma mali'.</title>
        <authorList>
            <person name="Kube M."/>
            <person name="Schneider B."/>
            <person name="Kuhl H."/>
            <person name="Dandekar T."/>
            <person name="Heitmann K."/>
            <person name="Migdoll A.M."/>
            <person name="Reinhardt R."/>
            <person name="Seemueller E."/>
        </authorList>
    </citation>
    <scope>NUCLEOTIDE SEQUENCE [LARGE SCALE GENOMIC DNA]</scope>
    <source>
        <strain>AT</strain>
    </source>
</reference>
<evidence type="ECO:0000255" key="1">
    <source>
        <dbReference type="HAMAP-Rule" id="MF_00051"/>
    </source>
</evidence>
<protein>
    <recommendedName>
        <fullName evidence="1">Serine hydroxymethyltransferase</fullName>
        <shortName evidence="1">SHMT</shortName>
        <shortName evidence="1">Serine methylase</shortName>
        <ecNumber evidence="1">2.1.2.1</ecNumber>
    </recommendedName>
</protein>
<name>GLYA_PHYMT</name>
<gene>
    <name evidence="1" type="primary">glyA</name>
    <name type="ordered locus">ATP_00142</name>
</gene>
<keyword id="KW-0028">Amino-acid biosynthesis</keyword>
<keyword id="KW-0963">Cytoplasm</keyword>
<keyword id="KW-0554">One-carbon metabolism</keyword>
<keyword id="KW-0663">Pyridoxal phosphate</keyword>
<keyword id="KW-1185">Reference proteome</keyword>
<keyword id="KW-0808">Transferase</keyword>
<feature type="chain" id="PRO_0000369948" description="Serine hydroxymethyltransferase">
    <location>
        <begin position="1"/>
        <end position="419"/>
    </location>
</feature>
<feature type="binding site" evidence="1">
    <location>
        <position position="121"/>
    </location>
    <ligand>
        <name>(6S)-5,6,7,8-tetrahydrofolate</name>
        <dbReference type="ChEBI" id="CHEBI:57453"/>
    </ligand>
</feature>
<feature type="binding site" evidence="1">
    <location>
        <begin position="125"/>
        <end position="127"/>
    </location>
    <ligand>
        <name>(6S)-5,6,7,8-tetrahydrofolate</name>
        <dbReference type="ChEBI" id="CHEBI:57453"/>
    </ligand>
</feature>
<feature type="site" description="Plays an important role in substrate specificity" evidence="1">
    <location>
        <position position="230"/>
    </location>
</feature>
<feature type="modified residue" description="N6-(pyridoxal phosphate)lysine" evidence="1">
    <location>
        <position position="231"/>
    </location>
</feature>
<comment type="function">
    <text evidence="1">Catalyzes the reversible interconversion of serine and glycine with tetrahydrofolate (THF) serving as the one-carbon carrier. This reaction serves as the major source of one-carbon groups required for the biosynthesis of purines, thymidylate, methionine, and other important biomolecules. Also exhibits THF-independent aldolase activity toward beta-hydroxyamino acids, producing glycine and aldehydes, via a retro-aldol mechanism.</text>
</comment>
<comment type="catalytic activity">
    <reaction evidence="1">
        <text>(6R)-5,10-methylene-5,6,7,8-tetrahydrofolate + glycine + H2O = (6S)-5,6,7,8-tetrahydrofolate + L-serine</text>
        <dbReference type="Rhea" id="RHEA:15481"/>
        <dbReference type="ChEBI" id="CHEBI:15377"/>
        <dbReference type="ChEBI" id="CHEBI:15636"/>
        <dbReference type="ChEBI" id="CHEBI:33384"/>
        <dbReference type="ChEBI" id="CHEBI:57305"/>
        <dbReference type="ChEBI" id="CHEBI:57453"/>
        <dbReference type="EC" id="2.1.2.1"/>
    </reaction>
</comment>
<comment type="cofactor">
    <cofactor evidence="1">
        <name>pyridoxal 5'-phosphate</name>
        <dbReference type="ChEBI" id="CHEBI:597326"/>
    </cofactor>
</comment>
<comment type="pathway">
    <text evidence="1">One-carbon metabolism; tetrahydrofolate interconversion.</text>
</comment>
<comment type="pathway">
    <text evidence="1">Amino-acid biosynthesis; glycine biosynthesis; glycine from L-serine: step 1/1.</text>
</comment>
<comment type="subunit">
    <text evidence="1">Homodimer.</text>
</comment>
<comment type="subcellular location">
    <subcellularLocation>
        <location evidence="1">Cytoplasm</location>
    </subcellularLocation>
</comment>
<comment type="similarity">
    <text evidence="1">Belongs to the SHMT family.</text>
</comment>